<feature type="chain" id="PRO_1000050837" description="D-aminoacyl-tRNA deacylase">
    <location>
        <begin position="1"/>
        <end position="144"/>
    </location>
</feature>
<feature type="short sequence motif" description="Gly-cisPro motif, important for rejection of L-amino acids" evidence="1">
    <location>
        <begin position="136"/>
        <end position="137"/>
    </location>
</feature>
<keyword id="KW-0963">Cytoplasm</keyword>
<keyword id="KW-0378">Hydrolase</keyword>
<keyword id="KW-0694">RNA-binding</keyword>
<keyword id="KW-0820">tRNA-binding</keyword>
<sequence length="144" mass="15871">MIALIQRVSQAKVNVKGETIGKIGKGLLVLLGVEKEDNREKADKLAEKVLNYRIFSDENDKMNLNVQQAQGELLIVSQFTLAADTQKGLRPSFSKGAPPALANELYEYFIQKCAEKLPVSTGQFAADMQVSLTNDGPVTFWLNV</sequence>
<gene>
    <name evidence="1" type="primary">dtd</name>
    <name type="ordered locus">CGSHiGG_06625</name>
</gene>
<comment type="function">
    <text evidence="1">An aminoacyl-tRNA editing enzyme that deacylates mischarged D-aminoacyl-tRNAs. Also deacylates mischarged glycyl-tRNA(Ala), protecting cells against glycine mischarging by AlaRS. Acts via tRNA-based rather than protein-based catalysis; rejects L-amino acids rather than detecting D-amino acids in the active site. By recycling D-aminoacyl-tRNA to D-amino acids and free tRNA molecules, this enzyme counteracts the toxicity associated with the formation of D-aminoacyl-tRNA entities in vivo and helps enforce protein L-homochirality.</text>
</comment>
<comment type="catalytic activity">
    <reaction evidence="1">
        <text>glycyl-tRNA(Ala) + H2O = tRNA(Ala) + glycine + H(+)</text>
        <dbReference type="Rhea" id="RHEA:53744"/>
        <dbReference type="Rhea" id="RHEA-COMP:9657"/>
        <dbReference type="Rhea" id="RHEA-COMP:13640"/>
        <dbReference type="ChEBI" id="CHEBI:15377"/>
        <dbReference type="ChEBI" id="CHEBI:15378"/>
        <dbReference type="ChEBI" id="CHEBI:57305"/>
        <dbReference type="ChEBI" id="CHEBI:78442"/>
        <dbReference type="ChEBI" id="CHEBI:78522"/>
        <dbReference type="EC" id="3.1.1.96"/>
    </reaction>
</comment>
<comment type="catalytic activity">
    <reaction evidence="1">
        <text>a D-aminoacyl-tRNA + H2O = a tRNA + a D-alpha-amino acid + H(+)</text>
        <dbReference type="Rhea" id="RHEA:13953"/>
        <dbReference type="Rhea" id="RHEA-COMP:10123"/>
        <dbReference type="Rhea" id="RHEA-COMP:10124"/>
        <dbReference type="ChEBI" id="CHEBI:15377"/>
        <dbReference type="ChEBI" id="CHEBI:15378"/>
        <dbReference type="ChEBI" id="CHEBI:59871"/>
        <dbReference type="ChEBI" id="CHEBI:78442"/>
        <dbReference type="ChEBI" id="CHEBI:79333"/>
        <dbReference type="EC" id="3.1.1.96"/>
    </reaction>
</comment>
<comment type="subunit">
    <text evidence="1">Homodimer.</text>
</comment>
<comment type="subcellular location">
    <subcellularLocation>
        <location evidence="1">Cytoplasm</location>
    </subcellularLocation>
</comment>
<comment type="domain">
    <text evidence="1">A Gly-cisPro motif from one monomer fits into the active site of the other monomer to allow specific chiral rejection of L-amino acids.</text>
</comment>
<comment type="similarity">
    <text evidence="1">Belongs to the DTD family.</text>
</comment>
<dbReference type="EC" id="3.1.1.96" evidence="1"/>
<dbReference type="EMBL" id="CP000672">
    <property type="protein sequence ID" value="ABR00215.1"/>
    <property type="molecule type" value="Genomic_DNA"/>
</dbReference>
<dbReference type="SMR" id="A5UHF9"/>
<dbReference type="KEGG" id="hiq:CGSHiGG_06625"/>
<dbReference type="HOGENOM" id="CLU_076901_1_1_6"/>
<dbReference type="Proteomes" id="UP000001990">
    <property type="component" value="Chromosome"/>
</dbReference>
<dbReference type="GO" id="GO:0005737">
    <property type="term" value="C:cytoplasm"/>
    <property type="evidence" value="ECO:0007669"/>
    <property type="project" value="UniProtKB-SubCell"/>
</dbReference>
<dbReference type="GO" id="GO:0051500">
    <property type="term" value="F:D-tyrosyl-tRNA(Tyr) deacylase activity"/>
    <property type="evidence" value="ECO:0007669"/>
    <property type="project" value="TreeGrafter"/>
</dbReference>
<dbReference type="GO" id="GO:0106026">
    <property type="term" value="F:Gly-tRNA(Ala) deacylase activity"/>
    <property type="evidence" value="ECO:0007669"/>
    <property type="project" value="UniProtKB-UniRule"/>
</dbReference>
<dbReference type="GO" id="GO:0043908">
    <property type="term" value="F:Ser(Gly)-tRNA(Ala) hydrolase activity"/>
    <property type="evidence" value="ECO:0007669"/>
    <property type="project" value="UniProtKB-UniRule"/>
</dbReference>
<dbReference type="GO" id="GO:0000049">
    <property type="term" value="F:tRNA binding"/>
    <property type="evidence" value="ECO:0007669"/>
    <property type="project" value="UniProtKB-UniRule"/>
</dbReference>
<dbReference type="GO" id="GO:0019478">
    <property type="term" value="P:D-amino acid catabolic process"/>
    <property type="evidence" value="ECO:0007669"/>
    <property type="project" value="UniProtKB-UniRule"/>
</dbReference>
<dbReference type="CDD" id="cd00563">
    <property type="entry name" value="Dtyr_deacylase"/>
    <property type="match status" value="1"/>
</dbReference>
<dbReference type="FunFam" id="3.50.80.10:FF:000001">
    <property type="entry name" value="D-aminoacyl-tRNA deacylase"/>
    <property type="match status" value="1"/>
</dbReference>
<dbReference type="Gene3D" id="3.50.80.10">
    <property type="entry name" value="D-tyrosyl-tRNA(Tyr) deacylase"/>
    <property type="match status" value="1"/>
</dbReference>
<dbReference type="HAMAP" id="MF_00518">
    <property type="entry name" value="Deacylase_Dtd"/>
    <property type="match status" value="1"/>
</dbReference>
<dbReference type="InterPro" id="IPR003732">
    <property type="entry name" value="Daa-tRNA_deacyls_DTD"/>
</dbReference>
<dbReference type="InterPro" id="IPR023509">
    <property type="entry name" value="DTD-like_sf"/>
</dbReference>
<dbReference type="NCBIfam" id="TIGR00256">
    <property type="entry name" value="D-aminoacyl-tRNA deacylase"/>
    <property type="match status" value="1"/>
</dbReference>
<dbReference type="PANTHER" id="PTHR10472:SF5">
    <property type="entry name" value="D-AMINOACYL-TRNA DEACYLASE 1"/>
    <property type="match status" value="1"/>
</dbReference>
<dbReference type="PANTHER" id="PTHR10472">
    <property type="entry name" value="D-TYROSYL-TRNA TYR DEACYLASE"/>
    <property type="match status" value="1"/>
</dbReference>
<dbReference type="Pfam" id="PF02580">
    <property type="entry name" value="Tyr_Deacylase"/>
    <property type="match status" value="1"/>
</dbReference>
<dbReference type="SUPFAM" id="SSF69500">
    <property type="entry name" value="DTD-like"/>
    <property type="match status" value="1"/>
</dbReference>
<reference key="1">
    <citation type="journal article" date="2007" name="Genome Biol.">
        <title>Characterization and modeling of the Haemophilus influenzae core and supragenomes based on the complete genomic sequences of Rd and 12 clinical nontypeable strains.</title>
        <authorList>
            <person name="Hogg J.S."/>
            <person name="Hu F.Z."/>
            <person name="Janto B."/>
            <person name="Boissy R."/>
            <person name="Hayes J."/>
            <person name="Keefe R."/>
            <person name="Post J.C."/>
            <person name="Ehrlich G.D."/>
        </authorList>
    </citation>
    <scope>NUCLEOTIDE SEQUENCE [LARGE SCALE GENOMIC DNA]</scope>
    <source>
        <strain>PittGG</strain>
    </source>
</reference>
<protein>
    <recommendedName>
        <fullName evidence="1">D-aminoacyl-tRNA deacylase</fullName>
        <shortName evidence="1">DTD</shortName>
        <ecNumber evidence="1">3.1.1.96</ecNumber>
    </recommendedName>
    <alternativeName>
        <fullName evidence="1">Gly-tRNA(Ala) deacylase</fullName>
    </alternativeName>
</protein>
<proteinExistence type="inferred from homology"/>
<accession>A5UHF9</accession>
<organism>
    <name type="scientific">Haemophilus influenzae (strain PittGG)</name>
    <dbReference type="NCBI Taxonomy" id="374931"/>
    <lineage>
        <taxon>Bacteria</taxon>
        <taxon>Pseudomonadati</taxon>
        <taxon>Pseudomonadota</taxon>
        <taxon>Gammaproteobacteria</taxon>
        <taxon>Pasteurellales</taxon>
        <taxon>Pasteurellaceae</taxon>
        <taxon>Haemophilus</taxon>
    </lineage>
</organism>
<name>DTD_HAEIG</name>
<evidence type="ECO:0000255" key="1">
    <source>
        <dbReference type="HAMAP-Rule" id="MF_00518"/>
    </source>
</evidence>